<gene>
    <name type="primary">His2Av</name>
    <name type="synonym">H2AvD</name>
    <name type="synonym">His2AvD</name>
    <name type="ORF">CG5499</name>
</gene>
<dbReference type="EMBL" id="X07485">
    <property type="protein sequence ID" value="CAA30370.1"/>
    <property type="molecule type" value="mRNA"/>
</dbReference>
<dbReference type="EMBL" id="X15549">
    <property type="protein sequence ID" value="CAA33555.1"/>
    <property type="molecule type" value="Genomic_DNA"/>
</dbReference>
<dbReference type="EMBL" id="AM294365">
    <property type="protein sequence ID" value="CAL26295.1"/>
    <property type="molecule type" value="Genomic_DNA"/>
</dbReference>
<dbReference type="EMBL" id="AM294366">
    <property type="protein sequence ID" value="CAL26296.1"/>
    <property type="molecule type" value="Genomic_DNA"/>
</dbReference>
<dbReference type="EMBL" id="AM294367">
    <property type="protein sequence ID" value="CAL26297.1"/>
    <property type="molecule type" value="Genomic_DNA"/>
</dbReference>
<dbReference type="EMBL" id="AM294368">
    <property type="protein sequence ID" value="CAL26298.1"/>
    <property type="molecule type" value="Genomic_DNA"/>
</dbReference>
<dbReference type="EMBL" id="AM294369">
    <property type="protein sequence ID" value="CAL26299.1"/>
    <property type="molecule type" value="Genomic_DNA"/>
</dbReference>
<dbReference type="EMBL" id="AM294370">
    <property type="protein sequence ID" value="CAL26300.1"/>
    <property type="molecule type" value="Genomic_DNA"/>
</dbReference>
<dbReference type="EMBL" id="AM294371">
    <property type="protein sequence ID" value="CAL26301.1"/>
    <property type="molecule type" value="Genomic_DNA"/>
</dbReference>
<dbReference type="EMBL" id="AM294372">
    <property type="protein sequence ID" value="CAL26302.1"/>
    <property type="molecule type" value="Genomic_DNA"/>
</dbReference>
<dbReference type="EMBL" id="FM245434">
    <property type="protein sequence ID" value="CAR93360.1"/>
    <property type="molecule type" value="Genomic_DNA"/>
</dbReference>
<dbReference type="EMBL" id="FM245435">
    <property type="protein sequence ID" value="CAR93361.1"/>
    <property type="molecule type" value="Genomic_DNA"/>
</dbReference>
<dbReference type="EMBL" id="FM245436">
    <property type="protein sequence ID" value="CAR93362.1"/>
    <property type="molecule type" value="Genomic_DNA"/>
</dbReference>
<dbReference type="EMBL" id="FM245437">
    <property type="protein sequence ID" value="CAR93363.1"/>
    <property type="molecule type" value="Genomic_DNA"/>
</dbReference>
<dbReference type="EMBL" id="FM245438">
    <property type="protein sequence ID" value="CAR93364.1"/>
    <property type="molecule type" value="Genomic_DNA"/>
</dbReference>
<dbReference type="EMBL" id="FM245439">
    <property type="protein sequence ID" value="CAR93365.1"/>
    <property type="molecule type" value="Genomic_DNA"/>
</dbReference>
<dbReference type="EMBL" id="FM245440">
    <property type="protein sequence ID" value="CAR93366.1"/>
    <property type="molecule type" value="Genomic_DNA"/>
</dbReference>
<dbReference type="EMBL" id="FM245441">
    <property type="protein sequence ID" value="CAR93367.1"/>
    <property type="molecule type" value="Genomic_DNA"/>
</dbReference>
<dbReference type="EMBL" id="FM245442">
    <property type="protein sequence ID" value="CAR93368.1"/>
    <property type="molecule type" value="Genomic_DNA"/>
</dbReference>
<dbReference type="EMBL" id="FM245443">
    <property type="protein sequence ID" value="CAR93369.1"/>
    <property type="molecule type" value="Genomic_DNA"/>
</dbReference>
<dbReference type="EMBL" id="FM245444">
    <property type="protein sequence ID" value="CAR93370.1"/>
    <property type="molecule type" value="Genomic_DNA"/>
</dbReference>
<dbReference type="EMBL" id="FM245445">
    <property type="protein sequence ID" value="CAR93371.1"/>
    <property type="molecule type" value="Genomic_DNA"/>
</dbReference>
<dbReference type="EMBL" id="AE014297">
    <property type="protein sequence ID" value="AAF56631.1"/>
    <property type="molecule type" value="Genomic_DNA"/>
</dbReference>
<dbReference type="EMBL" id="AY118910">
    <property type="protein sequence ID" value="AAM50770.1"/>
    <property type="molecule type" value="mRNA"/>
</dbReference>
<dbReference type="EMBL" id="S42733">
    <property type="protein sequence ID" value="AAB22897.1"/>
    <property type="molecule type" value="Genomic_DNA"/>
</dbReference>
<dbReference type="PIR" id="S08118">
    <property type="entry name" value="S08118"/>
</dbReference>
<dbReference type="RefSeq" id="NP_001262997.1">
    <property type="nucleotide sequence ID" value="NM_001276068.1"/>
</dbReference>
<dbReference type="RefSeq" id="NP_524519.1">
    <property type="nucleotide sequence ID" value="NM_079795.3"/>
</dbReference>
<dbReference type="SMR" id="P08985"/>
<dbReference type="BioGRID" id="68120">
    <property type="interactions" value="33"/>
</dbReference>
<dbReference type="DIP" id="DIP-23205N"/>
<dbReference type="FunCoup" id="P08985">
    <property type="interactions" value="1954"/>
</dbReference>
<dbReference type="IntAct" id="P08985">
    <property type="interactions" value="7"/>
</dbReference>
<dbReference type="MINT" id="P08985"/>
<dbReference type="STRING" id="7227.FBpp0306426"/>
<dbReference type="iPTMnet" id="P08985"/>
<dbReference type="PaxDb" id="7227-FBpp0084434"/>
<dbReference type="DNASU" id="43229"/>
<dbReference type="EnsemblMetazoa" id="FBtr0085062">
    <property type="protein sequence ID" value="FBpp0084434"/>
    <property type="gene ID" value="FBgn0001197"/>
</dbReference>
<dbReference type="EnsemblMetazoa" id="FBtr0334311">
    <property type="protein sequence ID" value="FBpp0306426"/>
    <property type="gene ID" value="FBgn0001197"/>
</dbReference>
<dbReference type="GeneID" id="43229"/>
<dbReference type="KEGG" id="dme:Dmel_CG5499"/>
<dbReference type="AGR" id="FB:FBgn0001197"/>
<dbReference type="CTD" id="43229"/>
<dbReference type="FlyBase" id="FBgn0001197">
    <property type="gene designation" value="His2Av"/>
</dbReference>
<dbReference type="VEuPathDB" id="VectorBase:FBgn0001197"/>
<dbReference type="eggNOG" id="KOG1757">
    <property type="taxonomic scope" value="Eukaryota"/>
</dbReference>
<dbReference type="GeneTree" id="ENSGT00900000140979"/>
<dbReference type="HOGENOM" id="CLU_062828_2_2_1"/>
<dbReference type="InParanoid" id="P08985"/>
<dbReference type="OMA" id="MNKKGAP"/>
<dbReference type="OrthoDB" id="9421954at2759"/>
<dbReference type="PhylomeDB" id="P08985"/>
<dbReference type="Reactome" id="R-DME-201722">
    <property type="pathway name" value="Formation of the beta-catenin:TCF transactivating complex"/>
</dbReference>
<dbReference type="Reactome" id="R-DME-212300">
    <property type="pathway name" value="PRC2 methylates histones and DNA"/>
</dbReference>
<dbReference type="Reactome" id="R-DME-2299718">
    <property type="pathway name" value="Condensation of Prophase Chromosomes"/>
</dbReference>
<dbReference type="Reactome" id="R-DME-2559580">
    <property type="pathway name" value="Oxidative Stress Induced Senescence"/>
</dbReference>
<dbReference type="Reactome" id="R-DME-2559582">
    <property type="pathway name" value="Senescence-Associated Secretory Phenotype (SASP)"/>
</dbReference>
<dbReference type="Reactome" id="R-DME-3214858">
    <property type="pathway name" value="RMTs methylate histone arginines"/>
</dbReference>
<dbReference type="Reactome" id="R-DME-427359">
    <property type="pathway name" value="SIRT1 negatively regulates rRNA expression"/>
</dbReference>
<dbReference type="Reactome" id="R-DME-427413">
    <property type="pathway name" value="NoRC negatively regulates rRNA expression"/>
</dbReference>
<dbReference type="Reactome" id="R-DME-5578749">
    <property type="pathway name" value="Transcriptional regulation by small RNAs"/>
</dbReference>
<dbReference type="Reactome" id="R-DME-5625886">
    <property type="pathway name" value="Activated PKN1 stimulates transcription of AR (androgen receptor) regulated genes KLK2 and KLK3"/>
</dbReference>
<dbReference type="Reactome" id="R-DME-68616">
    <property type="pathway name" value="Assembly of the ORC complex at the origin of replication"/>
</dbReference>
<dbReference type="Reactome" id="R-DME-73772">
    <property type="pathway name" value="RNA Polymerase I Promoter Escape"/>
</dbReference>
<dbReference type="Reactome" id="R-DME-8936459">
    <property type="pathway name" value="RUNX1 regulates genes involved in megakaryocyte differentiation and platelet function"/>
</dbReference>
<dbReference type="Reactome" id="R-DME-9018519">
    <property type="pathway name" value="Estrogen-dependent gene expression"/>
</dbReference>
<dbReference type="Reactome" id="R-DME-9841922">
    <property type="pathway name" value="MLL4 and MLL3 complexes regulate expression of PPARG target genes in adipogenesis and hepatic steatosis"/>
</dbReference>
<dbReference type="Reactome" id="R-DME-9843940">
    <property type="pathway name" value="Regulation of endogenous retroelements by KRAB-ZFP proteins"/>
</dbReference>
<dbReference type="SignaLink" id="P08985"/>
<dbReference type="BioGRID-ORCS" id="43229">
    <property type="hits" value="1 hit in 3 CRISPR screens"/>
</dbReference>
<dbReference type="CD-CODE" id="49BCF3D0">
    <property type="entry name" value="Histone Locus Body"/>
</dbReference>
<dbReference type="ChiTaRS" id="His2Av">
    <property type="organism name" value="fly"/>
</dbReference>
<dbReference type="GenomeRNAi" id="43229"/>
<dbReference type="PRO" id="PR:P08985"/>
<dbReference type="Proteomes" id="UP000000803">
    <property type="component" value="Chromosome 3R"/>
</dbReference>
<dbReference type="Bgee" id="FBgn0001197">
    <property type="expression patterns" value="Expressed in egg cell and 265 other cell types or tissues"/>
</dbReference>
<dbReference type="ExpressionAtlas" id="P08985">
    <property type="expression patterns" value="baseline and differential"/>
</dbReference>
<dbReference type="GO" id="GO:0005694">
    <property type="term" value="C:chromosome"/>
    <property type="evidence" value="ECO:0000314"/>
    <property type="project" value="FlyBase"/>
</dbReference>
<dbReference type="GO" id="GO:0000791">
    <property type="term" value="C:euchromatin"/>
    <property type="evidence" value="ECO:0000315"/>
    <property type="project" value="FlyBase"/>
</dbReference>
<dbReference type="GO" id="GO:0000786">
    <property type="term" value="C:nucleosome"/>
    <property type="evidence" value="ECO:0000314"/>
    <property type="project" value="FlyBase"/>
</dbReference>
<dbReference type="GO" id="GO:0005634">
    <property type="term" value="C:nucleus"/>
    <property type="evidence" value="ECO:0000314"/>
    <property type="project" value="FlyBase"/>
</dbReference>
<dbReference type="GO" id="GO:0005700">
    <property type="term" value="C:polytene chromosome"/>
    <property type="evidence" value="ECO:0000314"/>
    <property type="project" value="FlyBase"/>
</dbReference>
<dbReference type="GO" id="GO:0005701">
    <property type="term" value="C:polytene chromosome chromocenter"/>
    <property type="evidence" value="ECO:0000314"/>
    <property type="project" value="FlyBase"/>
</dbReference>
<dbReference type="GO" id="GO:0035861">
    <property type="term" value="C:site of double-strand break"/>
    <property type="evidence" value="ECO:0000314"/>
    <property type="project" value="FlyBase"/>
</dbReference>
<dbReference type="GO" id="GO:0003677">
    <property type="term" value="F:DNA binding"/>
    <property type="evidence" value="ECO:0007669"/>
    <property type="project" value="UniProtKB-KW"/>
</dbReference>
<dbReference type="GO" id="GO:0046982">
    <property type="term" value="F:protein heterodimerization activity"/>
    <property type="evidence" value="ECO:0007669"/>
    <property type="project" value="InterPro"/>
</dbReference>
<dbReference type="GO" id="GO:0044877">
    <property type="term" value="F:protein-containing complex binding"/>
    <property type="evidence" value="ECO:0000314"/>
    <property type="project" value="UniProtKB"/>
</dbReference>
<dbReference type="GO" id="GO:0030527">
    <property type="term" value="F:structural constituent of chromatin"/>
    <property type="evidence" value="ECO:0000318"/>
    <property type="project" value="GO_Central"/>
</dbReference>
<dbReference type="GO" id="GO:0006281">
    <property type="term" value="P:DNA repair"/>
    <property type="evidence" value="ECO:0007669"/>
    <property type="project" value="UniProtKB-KW"/>
</dbReference>
<dbReference type="GO" id="GO:0031507">
    <property type="term" value="P:heterochromatin formation"/>
    <property type="evidence" value="ECO:0000318"/>
    <property type="project" value="GO_Central"/>
</dbReference>
<dbReference type="GO" id="GO:0036098">
    <property type="term" value="P:male germ-line stem cell population maintenance"/>
    <property type="evidence" value="ECO:0000315"/>
    <property type="project" value="FlyBase"/>
</dbReference>
<dbReference type="GO" id="GO:0140694">
    <property type="term" value="P:membraneless organelle assembly"/>
    <property type="evidence" value="ECO:0000315"/>
    <property type="project" value="FlyBase"/>
</dbReference>
<dbReference type="GO" id="GO:0061060">
    <property type="term" value="P:negative regulation of peptidoglycan recognition protein signaling pathway"/>
    <property type="evidence" value="ECO:0000316"/>
    <property type="project" value="FlyBase"/>
</dbReference>
<dbReference type="GO" id="GO:0071168">
    <property type="term" value="P:protein localization to chromatin"/>
    <property type="evidence" value="ECO:0000314"/>
    <property type="project" value="FlyBase"/>
</dbReference>
<dbReference type="GO" id="GO:1903405">
    <property type="term" value="P:protein localization to nuclear body"/>
    <property type="evidence" value="ECO:0000315"/>
    <property type="project" value="FlyBase"/>
</dbReference>
<dbReference type="GO" id="GO:0035019">
    <property type="term" value="P:somatic stem cell population maintenance"/>
    <property type="evidence" value="ECO:0000315"/>
    <property type="project" value="FlyBase"/>
</dbReference>
<dbReference type="CDD" id="cd00074">
    <property type="entry name" value="HFD_H2A"/>
    <property type="match status" value="1"/>
</dbReference>
<dbReference type="FunFam" id="1.10.20.10:FF:000005">
    <property type="entry name" value="Histone H2A"/>
    <property type="match status" value="1"/>
</dbReference>
<dbReference type="Gene3D" id="1.10.20.10">
    <property type="entry name" value="Histone, subunit A"/>
    <property type="match status" value="1"/>
</dbReference>
<dbReference type="InterPro" id="IPR009072">
    <property type="entry name" value="Histone-fold"/>
</dbReference>
<dbReference type="InterPro" id="IPR002119">
    <property type="entry name" value="Histone_H2A"/>
</dbReference>
<dbReference type="InterPro" id="IPR007125">
    <property type="entry name" value="Histone_H2A/H2B/H3"/>
</dbReference>
<dbReference type="InterPro" id="IPR032454">
    <property type="entry name" value="Histone_H2A_C"/>
</dbReference>
<dbReference type="InterPro" id="IPR032458">
    <property type="entry name" value="Histone_H2A_CS"/>
</dbReference>
<dbReference type="PANTHER" id="PTHR23430">
    <property type="entry name" value="HISTONE H2A"/>
    <property type="match status" value="1"/>
</dbReference>
<dbReference type="Pfam" id="PF00125">
    <property type="entry name" value="Histone"/>
    <property type="match status" value="1"/>
</dbReference>
<dbReference type="Pfam" id="PF16211">
    <property type="entry name" value="Histone_H2A_C"/>
    <property type="match status" value="1"/>
</dbReference>
<dbReference type="PRINTS" id="PR00620">
    <property type="entry name" value="HISTONEH2A"/>
</dbReference>
<dbReference type="SMART" id="SM00414">
    <property type="entry name" value="H2A"/>
    <property type="match status" value="1"/>
</dbReference>
<dbReference type="SUPFAM" id="SSF47113">
    <property type="entry name" value="Histone-fold"/>
    <property type="match status" value="1"/>
</dbReference>
<dbReference type="PROSITE" id="PS00046">
    <property type="entry name" value="HISTONE_H2A"/>
    <property type="match status" value="1"/>
</dbReference>
<proteinExistence type="evidence at protein level"/>
<evidence type="ECO:0000250" key="1"/>
<evidence type="ECO:0000256" key="2">
    <source>
        <dbReference type="SAM" id="MobiDB-lite"/>
    </source>
</evidence>
<evidence type="ECO:0000269" key="3">
    <source>
    </source>
</evidence>
<evidence type="ECO:0000269" key="4">
    <source>
    </source>
</evidence>
<evidence type="ECO:0000269" key="5">
    <source>
    </source>
</evidence>
<evidence type="ECO:0000269" key="6">
    <source>
    </source>
</evidence>
<evidence type="ECO:0000269" key="7">
    <source>
    </source>
</evidence>
<evidence type="ECO:0000269" key="8">
    <source>
    </source>
</evidence>
<evidence type="ECO:0000269" key="9">
    <source>
    </source>
</evidence>
<evidence type="ECO:0000269" key="10">
    <source>
    </source>
</evidence>
<evidence type="ECO:0000305" key="11"/>
<comment type="function">
    <text evidence="3 5 6 8">Variant histone H2A which replaces conventional H2A in a subset of nucleosomes. Nucleosomes wrap and compact DNA into chromatin, limiting DNA accessibility to the cellular machineries which require DNA as a template. Histones thereby play a central role in transcription regulation, DNA repair, DNA replication and chromosomal stability. DNA accessibility is regulated via a complex set of post-translational modifications of histones, also called histone code, and nucleosome remodeling. Acts as a Polycomb group (PcG) protein required to maintain the transcriptionally repressive state of homeotic genes of the animal throughout development. Required for histone H3 'Lys-9' methylation and histone H4 'Lys-12' acetylation, two modifications that are essential for heterochromatin formation. Also involved in DNA double strand break (DSB) repair. Essential for early development.</text>
</comment>
<comment type="subunit">
    <text evidence="10">The nucleosome is a histone octamer containing two molecules each of H2A, H2B, H3 and H4 assembled in one H3-H4 heterotetramer and two H2A-H2B heterodimers. The octamer wraps approximately 147 bp of DNA. H2A or its variant His2Av forms a heterodimer with H2B. Interacts with Nasp; this interaction directly or indirectly destabilizes His2Av (PubMed:36930688).</text>
</comment>
<comment type="subcellular location">
    <subcellularLocation>
        <location evidence="4">Nucleus</location>
    </subcellularLocation>
    <subcellularLocation>
        <location evidence="4">Chromosome</location>
    </subcellularLocation>
    <text>Widely distributed in the genome, irrespective of the transcriptional status or coding capacity of the sequence.</text>
</comment>
<comment type="developmental stage">
    <text evidence="6">Expressed both maternally and zygotically. Expressed in embryos and adults (females only).</text>
</comment>
<comment type="domain">
    <text>The [ST]-Q motif constitutes a recognition sequence for kinases from the PI3/PI4-kinase family.</text>
</comment>
<comment type="PTM">
    <text evidence="5">Phosphorylated. Phosphorylation of Ser-138 occurs in response to DNA double strand breaks (DSBs) generated by exogenous genotoxic agents. Phosphorylation is dependent on the DNA damage checkpoint kinases ATR and ATM, spreads on either side of a detected DSB site and may mark the surrounding chromatin for recruitment of proteins required for DNA damage signaling and repair.</text>
</comment>
<comment type="PTM">
    <text evidence="5 7">Acetylated on Lys-5 by Tip60. Acetylation is enhanced by Ser-138 phosphorylation and promotes the exchange of the phosphorylated form with the unmodified form of H2AV.</text>
</comment>
<comment type="PTM">
    <text evidence="1">Monoubiquitination of Lys-121 by sce/dRING gives a specific tag for epigenetic transcriptional repression.</text>
</comment>
<comment type="similarity">
    <text evidence="11">Belongs to the histone H2A family.</text>
</comment>
<name>H2AV_DROME</name>
<sequence length="141" mass="14981">MAGGKAGKDSGKAKAKAVSRSARAGLQFPVGRIHRHLKSRTTSHGRVGATAAVYSAAILEYLTAEVLELAGNASKDLKVKRITPRHLQLAIRGDEELDSLIKATIAGGGVIPHIHKSLIGKKEETVQDPQRKGNVILSQAY</sequence>
<protein>
    <recommendedName>
        <fullName>Histone H2A.v</fullName>
    </recommendedName>
    <alternativeName>
        <fullName>H2A.F/Z</fullName>
        <shortName>H2A.Z</shortName>
    </alternativeName>
</protein>
<organism>
    <name type="scientific">Drosophila melanogaster</name>
    <name type="common">Fruit fly</name>
    <dbReference type="NCBI Taxonomy" id="7227"/>
    <lineage>
        <taxon>Eukaryota</taxon>
        <taxon>Metazoa</taxon>
        <taxon>Ecdysozoa</taxon>
        <taxon>Arthropoda</taxon>
        <taxon>Hexapoda</taxon>
        <taxon>Insecta</taxon>
        <taxon>Pterygota</taxon>
        <taxon>Neoptera</taxon>
        <taxon>Endopterygota</taxon>
        <taxon>Diptera</taxon>
        <taxon>Brachycera</taxon>
        <taxon>Muscomorpha</taxon>
        <taxon>Ephydroidea</taxon>
        <taxon>Drosophilidae</taxon>
        <taxon>Drosophila</taxon>
        <taxon>Sophophora</taxon>
    </lineage>
</organism>
<keyword id="KW-0007">Acetylation</keyword>
<keyword id="KW-0158">Chromosome</keyword>
<keyword id="KW-0217">Developmental protein</keyword>
<keyword id="KW-0227">DNA damage</keyword>
<keyword id="KW-0234">DNA repair</keyword>
<keyword id="KW-0238">DNA-binding</keyword>
<keyword id="KW-1017">Isopeptide bond</keyword>
<keyword id="KW-0544">Nucleosome core</keyword>
<keyword id="KW-0539">Nucleus</keyword>
<keyword id="KW-0597">Phosphoprotein</keyword>
<keyword id="KW-1185">Reference proteome</keyword>
<keyword id="KW-0832">Ubl conjugation</keyword>
<feature type="initiator methionine" description="Removed" evidence="1">
    <location>
        <position position="1"/>
    </location>
</feature>
<feature type="chain" id="PRO_0000055309" description="Histone H2A.v">
    <location>
        <begin position="2"/>
        <end position="141"/>
    </location>
</feature>
<feature type="region of interest" description="Disordered" evidence="2">
    <location>
        <begin position="1"/>
        <end position="20"/>
    </location>
</feature>
<feature type="region of interest" description="Essential for function in development">
    <location>
        <begin position="93"/>
        <end position="103"/>
    </location>
</feature>
<feature type="short sequence motif" description="[ST]-Q motif">
    <location>
        <begin position="138"/>
        <end position="139"/>
    </location>
</feature>
<feature type="compositionally biased region" description="Basic and acidic residues" evidence="2">
    <location>
        <begin position="1"/>
        <end position="12"/>
    </location>
</feature>
<feature type="modified residue" description="N6-acetyllysine" evidence="7">
    <location>
        <position position="5"/>
    </location>
</feature>
<feature type="modified residue" description="Phosphoserine" evidence="5">
    <location>
        <position position="138"/>
    </location>
</feature>
<feature type="cross-link" description="Glycyl lysine isopeptide (Lys-Gly) (interchain with G-Cter in ubiquitin)" evidence="1">
    <location>
        <position position="121"/>
    </location>
</feature>
<feature type="sequence variant" description="In strain: ZBMEL377.">
    <original>G</original>
    <variation>D</variation>
    <location>
        <position position="25"/>
    </location>
</feature>
<feature type="sequence variant" description="In strain: ZBMEL131.">
    <original>A</original>
    <variation>T</variation>
    <location>
        <position position="90"/>
    </location>
</feature>
<feature type="sequence variant" description="In strain: MEL16 and ZBMEL84." evidence="9">
    <original>E</original>
    <variation>K</variation>
    <location>
        <position position="95"/>
    </location>
</feature>
<accession>P08985</accession>
<accession>A0ANX7</accession>
<accession>A0ANX8</accession>
<accession>A0ANY0</accession>
<accession>A0ANY3</accession>
<accession>C0MJB2</accession>
<accession>C0MJB9</accession>
<accession>Q26252</accession>
<accession>Q540X2</accession>
<accession>Q9VBB1</accession>
<reference key="1">
    <citation type="journal article" date="1988" name="Nucleic Acids Res.">
        <title>Drosophila has a single copy of the gene encoding a highly conserved histone H2A variant of the H2A.F/Z type.</title>
        <authorList>
            <person name="van Daal A."/>
            <person name="White E.M."/>
            <person name="Gorovsky M.A."/>
            <person name="Elgin S.C.R."/>
        </authorList>
    </citation>
    <scope>NUCLEOTIDE SEQUENCE [MRNA]</scope>
    <source>
        <tissue>Embryo</tissue>
    </source>
</reference>
<reference key="2">
    <citation type="journal article" date="1990" name="J. Mol. Evol.">
        <title>Conservation of intron position indicates separation of major and variant H2As is an early event in the evolution of eukaryotes.</title>
        <authorList>
            <person name="van Daal A."/>
            <person name="White E.M."/>
            <person name="Elgin S.C.R."/>
            <person name="Gorovsky M.A."/>
        </authorList>
    </citation>
    <scope>NUCLEOTIDE SEQUENCE [GENOMIC DNA]</scope>
    <source>
        <strain>Canton-S</strain>
    </source>
</reference>
<reference key="3">
    <citation type="journal article" date="2006" name="Genetics">
        <title>Widespread adaptive evolution of Drosophila genes with sex-biased expression.</title>
        <authorList>
            <person name="Proeschel M."/>
            <person name="Zhang Z."/>
            <person name="Parsch J."/>
        </authorList>
    </citation>
    <scope>NUCLEOTIDE SEQUENCE [GENOMIC DNA]</scope>
    <source>
        <strain>ZBMEL131</strain>
        <strain>ZBMEL186</strain>
        <strain>ZBMEL191</strain>
        <strain>ZBMEL377</strain>
        <strain>ZBMEL384</strain>
        <strain>ZBMEL82</strain>
        <strain>ZBMEL84</strain>
        <strain>ZBMEL95</strain>
    </source>
</reference>
<reference key="4">
    <citation type="journal article" date="2009" name="Mol. Biol. Evol.">
        <title>The influence of demography and weak selection on the McDonald-Kreitman test: an empirical study in Drosophila.</title>
        <authorList>
            <person name="Parsch J."/>
            <person name="Zhang Z."/>
            <person name="Baines J.F."/>
        </authorList>
    </citation>
    <scope>NUCLEOTIDE SEQUENCE [GENOMIC DNA]</scope>
    <scope>VARIANT LYS-95</scope>
    <source>
        <strain>MEL01</strain>
        <strain>MEL02</strain>
        <strain>MEL11</strain>
        <strain>MEL12</strain>
        <strain>MEL13</strain>
        <strain>MEL14</strain>
        <strain>MEL15</strain>
        <strain>MEL16</strain>
        <strain>MEL17</strain>
        <strain>MEL18</strain>
        <strain>MEL19</strain>
        <strain>MEL20</strain>
    </source>
</reference>
<reference key="5">
    <citation type="journal article" date="2000" name="Science">
        <title>The genome sequence of Drosophila melanogaster.</title>
        <authorList>
            <person name="Adams M.D."/>
            <person name="Celniker S.E."/>
            <person name="Holt R.A."/>
            <person name="Evans C.A."/>
            <person name="Gocayne J.D."/>
            <person name="Amanatides P.G."/>
            <person name="Scherer S.E."/>
            <person name="Li P.W."/>
            <person name="Hoskins R.A."/>
            <person name="Galle R.F."/>
            <person name="George R.A."/>
            <person name="Lewis S.E."/>
            <person name="Richards S."/>
            <person name="Ashburner M."/>
            <person name="Henderson S.N."/>
            <person name="Sutton G.G."/>
            <person name="Wortman J.R."/>
            <person name="Yandell M.D."/>
            <person name="Zhang Q."/>
            <person name="Chen L.X."/>
            <person name="Brandon R.C."/>
            <person name="Rogers Y.-H.C."/>
            <person name="Blazej R.G."/>
            <person name="Champe M."/>
            <person name="Pfeiffer B.D."/>
            <person name="Wan K.H."/>
            <person name="Doyle C."/>
            <person name="Baxter E.G."/>
            <person name="Helt G."/>
            <person name="Nelson C.R."/>
            <person name="Miklos G.L.G."/>
            <person name="Abril J.F."/>
            <person name="Agbayani A."/>
            <person name="An H.-J."/>
            <person name="Andrews-Pfannkoch C."/>
            <person name="Baldwin D."/>
            <person name="Ballew R.M."/>
            <person name="Basu A."/>
            <person name="Baxendale J."/>
            <person name="Bayraktaroglu L."/>
            <person name="Beasley E.M."/>
            <person name="Beeson K.Y."/>
            <person name="Benos P.V."/>
            <person name="Berman B.P."/>
            <person name="Bhandari D."/>
            <person name="Bolshakov S."/>
            <person name="Borkova D."/>
            <person name="Botchan M.R."/>
            <person name="Bouck J."/>
            <person name="Brokstein P."/>
            <person name="Brottier P."/>
            <person name="Burtis K.C."/>
            <person name="Busam D.A."/>
            <person name="Butler H."/>
            <person name="Cadieu E."/>
            <person name="Center A."/>
            <person name="Chandra I."/>
            <person name="Cherry J.M."/>
            <person name="Cawley S."/>
            <person name="Dahlke C."/>
            <person name="Davenport L.B."/>
            <person name="Davies P."/>
            <person name="de Pablos B."/>
            <person name="Delcher A."/>
            <person name="Deng Z."/>
            <person name="Mays A.D."/>
            <person name="Dew I."/>
            <person name="Dietz S.M."/>
            <person name="Dodson K."/>
            <person name="Doup L.E."/>
            <person name="Downes M."/>
            <person name="Dugan-Rocha S."/>
            <person name="Dunkov B.C."/>
            <person name="Dunn P."/>
            <person name="Durbin K.J."/>
            <person name="Evangelista C.C."/>
            <person name="Ferraz C."/>
            <person name="Ferriera S."/>
            <person name="Fleischmann W."/>
            <person name="Fosler C."/>
            <person name="Gabrielian A.E."/>
            <person name="Garg N.S."/>
            <person name="Gelbart W.M."/>
            <person name="Glasser K."/>
            <person name="Glodek A."/>
            <person name="Gong F."/>
            <person name="Gorrell J.H."/>
            <person name="Gu Z."/>
            <person name="Guan P."/>
            <person name="Harris M."/>
            <person name="Harris N.L."/>
            <person name="Harvey D.A."/>
            <person name="Heiman T.J."/>
            <person name="Hernandez J.R."/>
            <person name="Houck J."/>
            <person name="Hostin D."/>
            <person name="Houston K.A."/>
            <person name="Howland T.J."/>
            <person name="Wei M.-H."/>
            <person name="Ibegwam C."/>
            <person name="Jalali M."/>
            <person name="Kalush F."/>
            <person name="Karpen G.H."/>
            <person name="Ke Z."/>
            <person name="Kennison J.A."/>
            <person name="Ketchum K.A."/>
            <person name="Kimmel B.E."/>
            <person name="Kodira C.D."/>
            <person name="Kraft C.L."/>
            <person name="Kravitz S."/>
            <person name="Kulp D."/>
            <person name="Lai Z."/>
            <person name="Lasko P."/>
            <person name="Lei Y."/>
            <person name="Levitsky A.A."/>
            <person name="Li J.H."/>
            <person name="Li Z."/>
            <person name="Liang Y."/>
            <person name="Lin X."/>
            <person name="Liu X."/>
            <person name="Mattei B."/>
            <person name="McIntosh T.C."/>
            <person name="McLeod M.P."/>
            <person name="McPherson D."/>
            <person name="Merkulov G."/>
            <person name="Milshina N.V."/>
            <person name="Mobarry C."/>
            <person name="Morris J."/>
            <person name="Moshrefi A."/>
            <person name="Mount S.M."/>
            <person name="Moy M."/>
            <person name="Murphy B."/>
            <person name="Murphy L."/>
            <person name="Muzny D.M."/>
            <person name="Nelson D.L."/>
            <person name="Nelson D.R."/>
            <person name="Nelson K.A."/>
            <person name="Nixon K."/>
            <person name="Nusskern D.R."/>
            <person name="Pacleb J.M."/>
            <person name="Palazzolo M."/>
            <person name="Pittman G.S."/>
            <person name="Pan S."/>
            <person name="Pollard J."/>
            <person name="Puri V."/>
            <person name="Reese M.G."/>
            <person name="Reinert K."/>
            <person name="Remington K."/>
            <person name="Saunders R.D.C."/>
            <person name="Scheeler F."/>
            <person name="Shen H."/>
            <person name="Shue B.C."/>
            <person name="Siden-Kiamos I."/>
            <person name="Simpson M."/>
            <person name="Skupski M.P."/>
            <person name="Smith T.J."/>
            <person name="Spier E."/>
            <person name="Spradling A.C."/>
            <person name="Stapleton M."/>
            <person name="Strong R."/>
            <person name="Sun E."/>
            <person name="Svirskas R."/>
            <person name="Tector C."/>
            <person name="Turner R."/>
            <person name="Venter E."/>
            <person name="Wang A.H."/>
            <person name="Wang X."/>
            <person name="Wang Z.-Y."/>
            <person name="Wassarman D.A."/>
            <person name="Weinstock G.M."/>
            <person name="Weissenbach J."/>
            <person name="Williams S.M."/>
            <person name="Woodage T."/>
            <person name="Worley K.C."/>
            <person name="Wu D."/>
            <person name="Yang S."/>
            <person name="Yao Q.A."/>
            <person name="Ye J."/>
            <person name="Yeh R.-F."/>
            <person name="Zaveri J.S."/>
            <person name="Zhan M."/>
            <person name="Zhang G."/>
            <person name="Zhao Q."/>
            <person name="Zheng L."/>
            <person name="Zheng X.H."/>
            <person name="Zhong F.N."/>
            <person name="Zhong W."/>
            <person name="Zhou X."/>
            <person name="Zhu S.C."/>
            <person name="Zhu X."/>
            <person name="Smith H.O."/>
            <person name="Gibbs R.A."/>
            <person name="Myers E.W."/>
            <person name="Rubin G.M."/>
            <person name="Venter J.C."/>
        </authorList>
    </citation>
    <scope>NUCLEOTIDE SEQUENCE [LARGE SCALE GENOMIC DNA]</scope>
    <source>
        <strain>Berkeley</strain>
    </source>
</reference>
<reference key="6">
    <citation type="journal article" date="2002" name="Genome Biol.">
        <title>Annotation of the Drosophila melanogaster euchromatic genome: a systematic review.</title>
        <authorList>
            <person name="Misra S."/>
            <person name="Crosby M.A."/>
            <person name="Mungall C.J."/>
            <person name="Matthews B.B."/>
            <person name="Campbell K.S."/>
            <person name="Hradecky P."/>
            <person name="Huang Y."/>
            <person name="Kaminker J.S."/>
            <person name="Millburn G.H."/>
            <person name="Prochnik S.E."/>
            <person name="Smith C.D."/>
            <person name="Tupy J.L."/>
            <person name="Whitfield E.J."/>
            <person name="Bayraktaroglu L."/>
            <person name="Berman B.P."/>
            <person name="Bettencourt B.R."/>
            <person name="Celniker S.E."/>
            <person name="de Grey A.D.N.J."/>
            <person name="Drysdale R.A."/>
            <person name="Harris N.L."/>
            <person name="Richter J."/>
            <person name="Russo S."/>
            <person name="Schroeder A.J."/>
            <person name="Shu S.Q."/>
            <person name="Stapleton M."/>
            <person name="Yamada C."/>
            <person name="Ashburner M."/>
            <person name="Gelbart W.M."/>
            <person name="Rubin G.M."/>
            <person name="Lewis S.E."/>
        </authorList>
    </citation>
    <scope>GENOME REANNOTATION</scope>
    <source>
        <strain>Berkeley</strain>
    </source>
</reference>
<reference key="7">
    <citation type="journal article" date="2002" name="Genome Biol.">
        <title>A Drosophila full-length cDNA resource.</title>
        <authorList>
            <person name="Stapleton M."/>
            <person name="Carlson J.W."/>
            <person name="Brokstein P."/>
            <person name="Yu C."/>
            <person name="Champe M."/>
            <person name="George R.A."/>
            <person name="Guarin H."/>
            <person name="Kronmiller B."/>
            <person name="Pacleb J.M."/>
            <person name="Park S."/>
            <person name="Wan K.H."/>
            <person name="Rubin G.M."/>
            <person name="Celniker S.E."/>
        </authorList>
    </citation>
    <scope>NUCLEOTIDE SEQUENCE [LARGE SCALE MRNA]</scope>
    <source>
        <strain>Berkeley</strain>
        <tissue>Embryo</tissue>
    </source>
</reference>
<reference key="8">
    <citation type="journal article" date="1992" name="Mol. Biol. Cell">
        <title>A histone variant, H2AvD, is essential in Drosophila melanogaster.</title>
        <authorList>
            <person name="Van Daal A."/>
            <person name="Elgin S.C.R."/>
        </authorList>
    </citation>
    <scope>NUCLEOTIDE SEQUENCE [GENOMIC DNA] OF 1-53</scope>
    <scope>FUNCTION</scope>
    <scope>DEVELOPMENTAL STAGE</scope>
</reference>
<reference key="9">
    <citation type="journal article" date="1999" name="Nature">
        <title>Regions of variant histone His2AvD required for Drosophila development.</title>
        <authorList>
            <person name="Clarkson M.J."/>
            <person name="Wells J.R.E."/>
            <person name="Gibson F."/>
            <person name="Saint R."/>
            <person name="Tremethick D.J."/>
        </authorList>
    </citation>
    <scope>FUNCTION</scope>
</reference>
<reference key="10">
    <citation type="journal article" date="2000" name="J. Biol. Chem.">
        <title>Histone H2A.Z is widely but nonrandomly distributed in chromosomes of Drosophila melanogaster.</title>
        <authorList>
            <person name="Leach T.J."/>
            <person name="Mazzeo M."/>
            <person name="Chotkowski H.L."/>
            <person name="Madigan J.P."/>
            <person name="Wotring M.G."/>
            <person name="Glaser R.L."/>
        </authorList>
    </citation>
    <scope>SUBCELLULAR LOCATION</scope>
</reference>
<reference key="11">
    <citation type="journal article" date="2002" name="Nucleic Acids Res.">
        <title>DNA double-strand break-induced phosphorylation of Drosophila histone variant H2Av helps prevent radiation-induced apoptosis.</title>
        <authorList>
            <person name="Madigan J.P."/>
            <person name="Chotkowski H.L."/>
            <person name="Glaser R.L."/>
        </authorList>
    </citation>
    <scope>FUNCTION</scope>
    <scope>PHOSPHORYLATION AT SER-138</scope>
</reference>
<reference key="12">
    <citation type="journal article" date="2004" name="Science">
        <title>Acetylation by Tip60 is required for selective histone variant exchange at DNA lesions.</title>
        <authorList>
            <person name="Kusch T."/>
            <person name="Florens L."/>
            <person name="Macdonald W.H."/>
            <person name="Swanson S.K."/>
            <person name="Glaser R.L."/>
            <person name="Yates J.R. III"/>
            <person name="Abmayr S.M."/>
            <person name="Washburn M.P."/>
            <person name="Workman J.L."/>
        </authorList>
    </citation>
    <scope>ACETYLATION AT LYS-5</scope>
</reference>
<reference key="13">
    <citation type="journal article" date="2005" name="Genes Dev.">
        <title>The role of histone H2Av variant replacement and histone H4 acetylation in the establishment of Drosophila heterochromatin.</title>
        <authorList>
            <person name="Swaminathan J."/>
            <person name="Baxter E.M."/>
            <person name="Corces V.G."/>
        </authorList>
    </citation>
    <scope>FUNCTION</scope>
</reference>
<reference key="14">
    <citation type="journal article" date="2023" name="PLoS Genet.">
        <title>The histone chaperone NASP maintains H3-H4 reservoirs in the early Drosophila embryo.</title>
        <authorList>
            <person name="Tirgar R."/>
            <person name="Davies J.P."/>
            <person name="Plate L."/>
            <person name="Nordman J.T."/>
        </authorList>
    </citation>
    <scope>INTERACTION WITH NASP</scope>
</reference>